<keyword id="KW-0687">Ribonucleoprotein</keyword>
<keyword id="KW-0689">Ribosomal protein</keyword>
<keyword id="KW-0694">RNA-binding</keyword>
<keyword id="KW-0699">rRNA-binding</keyword>
<name>RS8_PSEU2</name>
<proteinExistence type="inferred from homology"/>
<dbReference type="EMBL" id="CP000075">
    <property type="protein sequence ID" value="AAY39564.1"/>
    <property type="molecule type" value="Genomic_DNA"/>
</dbReference>
<dbReference type="RefSeq" id="WP_002555475.1">
    <property type="nucleotide sequence ID" value="NC_007005.1"/>
</dbReference>
<dbReference type="RefSeq" id="YP_237602.1">
    <property type="nucleotide sequence ID" value="NC_007005.1"/>
</dbReference>
<dbReference type="SMR" id="Q4ZMQ8"/>
<dbReference type="STRING" id="205918.Psyr_4534"/>
<dbReference type="GeneID" id="96221016"/>
<dbReference type="KEGG" id="psb:Psyr_4534"/>
<dbReference type="PATRIC" id="fig|205918.7.peg.4673"/>
<dbReference type="eggNOG" id="COG0096">
    <property type="taxonomic scope" value="Bacteria"/>
</dbReference>
<dbReference type="HOGENOM" id="CLU_098428_0_0_6"/>
<dbReference type="OrthoDB" id="9802617at2"/>
<dbReference type="Proteomes" id="UP000000426">
    <property type="component" value="Chromosome"/>
</dbReference>
<dbReference type="GO" id="GO:1990904">
    <property type="term" value="C:ribonucleoprotein complex"/>
    <property type="evidence" value="ECO:0007669"/>
    <property type="project" value="UniProtKB-KW"/>
</dbReference>
<dbReference type="GO" id="GO:0005840">
    <property type="term" value="C:ribosome"/>
    <property type="evidence" value="ECO:0007669"/>
    <property type="project" value="UniProtKB-KW"/>
</dbReference>
<dbReference type="GO" id="GO:0019843">
    <property type="term" value="F:rRNA binding"/>
    <property type="evidence" value="ECO:0007669"/>
    <property type="project" value="UniProtKB-UniRule"/>
</dbReference>
<dbReference type="GO" id="GO:0003735">
    <property type="term" value="F:structural constituent of ribosome"/>
    <property type="evidence" value="ECO:0007669"/>
    <property type="project" value="InterPro"/>
</dbReference>
<dbReference type="GO" id="GO:0006412">
    <property type="term" value="P:translation"/>
    <property type="evidence" value="ECO:0007669"/>
    <property type="project" value="UniProtKB-UniRule"/>
</dbReference>
<dbReference type="FunFam" id="3.30.1370.30:FF:000002">
    <property type="entry name" value="30S ribosomal protein S8"/>
    <property type="match status" value="1"/>
</dbReference>
<dbReference type="FunFam" id="3.30.1490.10:FF:000001">
    <property type="entry name" value="30S ribosomal protein S8"/>
    <property type="match status" value="1"/>
</dbReference>
<dbReference type="Gene3D" id="3.30.1370.30">
    <property type="match status" value="1"/>
</dbReference>
<dbReference type="Gene3D" id="3.30.1490.10">
    <property type="match status" value="1"/>
</dbReference>
<dbReference type="HAMAP" id="MF_01302_B">
    <property type="entry name" value="Ribosomal_uS8_B"/>
    <property type="match status" value="1"/>
</dbReference>
<dbReference type="InterPro" id="IPR000630">
    <property type="entry name" value="Ribosomal_uS8"/>
</dbReference>
<dbReference type="InterPro" id="IPR047863">
    <property type="entry name" value="Ribosomal_uS8_CS"/>
</dbReference>
<dbReference type="InterPro" id="IPR035987">
    <property type="entry name" value="Ribosomal_uS8_sf"/>
</dbReference>
<dbReference type="NCBIfam" id="NF001109">
    <property type="entry name" value="PRK00136.1"/>
    <property type="match status" value="1"/>
</dbReference>
<dbReference type="PANTHER" id="PTHR11758">
    <property type="entry name" value="40S RIBOSOMAL PROTEIN S15A"/>
    <property type="match status" value="1"/>
</dbReference>
<dbReference type="Pfam" id="PF00410">
    <property type="entry name" value="Ribosomal_S8"/>
    <property type="match status" value="1"/>
</dbReference>
<dbReference type="SUPFAM" id="SSF56047">
    <property type="entry name" value="Ribosomal protein S8"/>
    <property type="match status" value="1"/>
</dbReference>
<dbReference type="PROSITE" id="PS00053">
    <property type="entry name" value="RIBOSOMAL_S8"/>
    <property type="match status" value="1"/>
</dbReference>
<evidence type="ECO:0000255" key="1">
    <source>
        <dbReference type="HAMAP-Rule" id="MF_01302"/>
    </source>
</evidence>
<evidence type="ECO:0000305" key="2"/>
<feature type="chain" id="PRO_0000225885" description="Small ribosomal subunit protein uS8">
    <location>
        <begin position="1"/>
        <end position="130"/>
    </location>
</feature>
<reference key="1">
    <citation type="journal article" date="2005" name="Proc. Natl. Acad. Sci. U.S.A.">
        <title>Comparison of the complete genome sequences of Pseudomonas syringae pv. syringae B728a and pv. tomato DC3000.</title>
        <authorList>
            <person name="Feil H."/>
            <person name="Feil W.S."/>
            <person name="Chain P."/>
            <person name="Larimer F."/>
            <person name="Dibartolo G."/>
            <person name="Copeland A."/>
            <person name="Lykidis A."/>
            <person name="Trong S."/>
            <person name="Nolan M."/>
            <person name="Goltsman E."/>
            <person name="Thiel J."/>
            <person name="Malfatti S."/>
            <person name="Loper J.E."/>
            <person name="Lapidus A."/>
            <person name="Detter J.C."/>
            <person name="Land M."/>
            <person name="Richardson P.M."/>
            <person name="Kyrpides N.C."/>
            <person name="Ivanova N."/>
            <person name="Lindow S.E."/>
        </authorList>
    </citation>
    <scope>NUCLEOTIDE SEQUENCE [LARGE SCALE GENOMIC DNA]</scope>
    <source>
        <strain>B728a</strain>
    </source>
</reference>
<gene>
    <name evidence="1" type="primary">rpsH</name>
    <name type="ordered locus">Psyr_4534</name>
</gene>
<sequence length="130" mass="14022">MSMQDPLADMLTRIRNAQMAEKPVVSMPSSTLKVAVAKVLKDEGYIAGYQISSEVKSSLSIELKYFEGRPVIEEVKRVSRPGLRQYKSSDDLPKVRGGLGVSIVSTSKGVMTDRAARAAGVGGEVLCTVF</sequence>
<protein>
    <recommendedName>
        <fullName evidence="1">Small ribosomal subunit protein uS8</fullName>
    </recommendedName>
    <alternativeName>
        <fullName evidence="2">30S ribosomal protein S8</fullName>
    </alternativeName>
</protein>
<comment type="function">
    <text evidence="1">One of the primary rRNA binding proteins, it binds directly to 16S rRNA central domain where it helps coordinate assembly of the platform of the 30S subunit.</text>
</comment>
<comment type="subunit">
    <text evidence="1">Part of the 30S ribosomal subunit. Contacts proteins S5 and S12.</text>
</comment>
<comment type="similarity">
    <text evidence="1">Belongs to the universal ribosomal protein uS8 family.</text>
</comment>
<accession>Q4ZMQ8</accession>
<organism>
    <name type="scientific">Pseudomonas syringae pv. syringae (strain B728a)</name>
    <dbReference type="NCBI Taxonomy" id="205918"/>
    <lineage>
        <taxon>Bacteria</taxon>
        <taxon>Pseudomonadati</taxon>
        <taxon>Pseudomonadota</taxon>
        <taxon>Gammaproteobacteria</taxon>
        <taxon>Pseudomonadales</taxon>
        <taxon>Pseudomonadaceae</taxon>
        <taxon>Pseudomonas</taxon>
        <taxon>Pseudomonas syringae</taxon>
    </lineage>
</organism>